<comment type="function">
    <text evidence="9">Involved in the targeting and/or fusion of transport vesicles to their target membrane. Acts in neuronal exocytosis of synaptic transmission. Likely to have a role in cholinergic transmisson. Required for viability, coordinated movement and M3 pharynx motor neuron function.</text>
</comment>
<comment type="subunit">
    <text evidence="1">Part of the SNARE core complex containing ric-4/SNAP25, snb-1/VAMP2 and unc-64/STX1A. This complex binds to cpx-1/CPLX1 (By similarity).</text>
</comment>
<comment type="subcellular location">
    <subcellularLocation>
        <location evidence="5 6 8">Cytoplasmic vesicle</location>
        <location evidence="5 6 8">Secretory vesicle</location>
        <location evidence="5 6 8">Synaptic vesicle membrane</location>
        <topology evidence="5 6 8">Single-pass type IV membrane protein</topology>
    </subcellularLocation>
    <subcellularLocation>
        <location evidence="5 6 8">Cell membrane</location>
    </subcellularLocation>
    <subcellularLocation>
        <location>Synapse</location>
        <location>Synaptosome</location>
    </subcellularLocation>
    <text evidence="1 5 6 8">Observed in discrete synaptic vesicle puncta along the ventral cord. Functional unc-104, a kinesin-like protein, is required for localization. The two pools of synaptobrevin are recycled by clatherin- and dynamin- dependent endocytosis. AP180-like adapter protein, unc-11, is thought to act as a molecular chaperone.</text>
</comment>
<comment type="tissue specificity">
    <text evidence="9">Expressed in the nervous system notably the nerve ring, ventral cord and dorsal cord.</text>
</comment>
<comment type="disruption phenotype">
    <text evidence="9">Worms exhibit arrested development after embryogenesis. Viable mutants appear lethargic with sporadic jerky movements and absent M3 pharynx motorneuron activity. All mutants are resistant to the acetylcholinesterase inhibitor aldicarb indicating impaired cholinergic transmission.</text>
</comment>
<comment type="similarity">
    <text evidence="2">Belongs to the synaptobrevin family.</text>
</comment>
<organism>
    <name type="scientific">Caenorhabditis elegans</name>
    <dbReference type="NCBI Taxonomy" id="6239"/>
    <lineage>
        <taxon>Eukaryota</taxon>
        <taxon>Metazoa</taxon>
        <taxon>Ecdysozoa</taxon>
        <taxon>Nematoda</taxon>
        <taxon>Chromadorea</taxon>
        <taxon>Rhabditida</taxon>
        <taxon>Rhabditina</taxon>
        <taxon>Rhabditomorpha</taxon>
        <taxon>Rhabditoidea</taxon>
        <taxon>Rhabditidae</taxon>
        <taxon>Peloderinae</taxon>
        <taxon>Caenorhabditis</taxon>
    </lineage>
</organism>
<feature type="chain" id="PRO_0000307354" description="Synaptobrevin-1">
    <location>
        <begin position="1"/>
        <end position="109"/>
    </location>
</feature>
<feature type="topological domain" description="Cytoplasmic" evidence="2">
    <location>
        <begin position="1"/>
        <end position="86"/>
    </location>
</feature>
<feature type="transmembrane region" description="Helical; Anchor for type IV membrane protein" evidence="2">
    <location>
        <begin position="87"/>
        <end position="107"/>
    </location>
</feature>
<feature type="topological domain" description="Extracellular" evidence="2">
    <location>
        <begin position="108"/>
        <end position="109"/>
    </location>
</feature>
<feature type="domain" description="v-SNARE coiled-coil homology" evidence="3">
    <location>
        <begin position="23"/>
        <end position="83"/>
    </location>
</feature>
<feature type="region of interest" description="Disordered" evidence="4">
    <location>
        <begin position="1"/>
        <end position="26"/>
    </location>
</feature>
<feature type="mutagenesis site" description="In js17; resist to aldicarb." evidence="9">
    <original>L</original>
    <variation>F</variation>
    <location>
        <position position="62"/>
    </location>
</feature>
<feature type="mutagenesis site" description="In js44; resist to aldicarb." evidence="9">
    <original>A</original>
    <variation>G</variation>
    <location>
        <position position="66"/>
    </location>
</feature>
<feature type="mutagenesis site" description="In e1563; viable showing only slightly increased rate of thrashing behavior." evidence="7">
    <original>I</original>
    <variation>D</variation>
    <location>
        <position position="97"/>
    </location>
</feature>
<gene>
    <name evidence="13" type="primary">snb-1</name>
    <name type="ORF">T10H9.4</name>
</gene>
<proteinExistence type="evidence at protein level"/>
<sequence>MDAQGDAGAQGGSQGGPRPSNKRLQQTQAQVDEVVGIMKVNVEKVLERDQKLSQLDDRADALQEGASQFEKSAATLKRKYWWKNIKMMIIMCAIVVILIIIIVLWAGGK</sequence>
<name>SYB1_CAEEL</name>
<reference evidence="10 11" key="1">
    <citation type="journal article" date="1998" name="J. Neurosci.">
        <title>Synaptic transmission deficits in Caenorhabditis elegans synaptobrevin mutants.</title>
        <authorList>
            <person name="Nonet M.L."/>
            <person name="Saifee O."/>
            <person name="Zhao H."/>
            <person name="Rand J.B."/>
            <person name="Wei L."/>
        </authorList>
    </citation>
    <scope>NUCLEOTIDE SEQUENCE [GENOMIC DNA / MRNA]</scope>
    <scope>FUNCTION</scope>
    <scope>TISSUE SPECIFICITY</scope>
    <scope>MUTAGENESIS OF LEU-62 AND ALA-66</scope>
    <scope>DISRUPTION PHENOTYPE</scope>
    <source>
        <strain evidence="12">Bristol N2</strain>
    </source>
</reference>
<reference key="2">
    <citation type="journal article" date="1998" name="Science">
        <title>Genome sequence of the nematode C. elegans: a platform for investigating biology.</title>
        <authorList>
            <consortium name="The C. elegans sequencing consortium"/>
        </authorList>
    </citation>
    <scope>NUCLEOTIDE SEQUENCE [LARGE SCALE GENOMIC DNA]</scope>
    <source>
        <strain>Bristol N2</strain>
    </source>
</reference>
<reference evidence="10" key="3">
    <citation type="journal article" date="1999" name="J. Neurosci. Methods">
        <title>Visualization of synaptic specializations in live C. elegans with synaptic vesicle protein-GFP fusions.</title>
        <authorList>
            <person name="Nonet M.L."/>
        </authorList>
    </citation>
    <scope>SUBCELLULAR LOCATION</scope>
</reference>
<reference evidence="10" key="4">
    <citation type="journal article" date="2004" name="Hum. Mol. Genet.">
        <title>Epileptic-like convulsions associated with LIS-1 in the cytoskeletal control of neurotransmitter signaling in Caenorhabditis elegans.</title>
        <authorList>
            <person name="Williams S.N."/>
            <person name="Locke C.J."/>
            <person name="Braden A.L."/>
            <person name="Caldwell K.A."/>
            <person name="Caldwell G.A."/>
        </authorList>
    </citation>
    <scope>SUBCELLULAR LOCATION</scope>
</reference>
<reference evidence="10" key="5">
    <citation type="journal article" date="2006" name="Nat. Neurosci.">
        <title>A genetic interaction between the vesicular acetylcholine transporter VAChT/UNC-17 and synaptobrevin/SNB-1 in C. elegans.</title>
        <authorList>
            <person name="Sandoval G.M."/>
            <person name="Duerr J.S."/>
            <person name="Hodgkin J."/>
            <person name="Rand J.B."/>
            <person name="Ruvkun G."/>
        </authorList>
    </citation>
    <scope>MUTAGENESIS OF ILE-97</scope>
</reference>
<reference evidence="10" key="6">
    <citation type="journal article" date="2006" name="Proc. Natl. Acad. Sci. U.S.A.">
        <title>Factors regulating the abundance and localization of synaptobrevin in the plasma membrane.</title>
        <authorList>
            <person name="Dittman J.S."/>
            <person name="Kaplan J.M."/>
        </authorList>
    </citation>
    <scope>SUBCELLULAR LOCATION</scope>
</reference>
<dbReference type="EMBL" id="AF003281">
    <property type="protein sequence ID" value="AAB61234.1"/>
    <property type="molecule type" value="mRNA"/>
</dbReference>
<dbReference type="EMBL" id="AF003282">
    <property type="protein sequence ID" value="AAB61235.1"/>
    <property type="molecule type" value="Genomic_DNA"/>
</dbReference>
<dbReference type="EMBL" id="FO081382">
    <property type="protein sequence ID" value="CCD71211.1"/>
    <property type="molecule type" value="Genomic_DNA"/>
</dbReference>
<dbReference type="PIR" id="T33239">
    <property type="entry name" value="T33239"/>
</dbReference>
<dbReference type="RefSeq" id="NP_001379956.1">
    <property type="nucleotide sequence ID" value="NM_001392536.1"/>
</dbReference>
<dbReference type="RefSeq" id="NP_504688.1">
    <property type="nucleotide sequence ID" value="NM_072287.4"/>
</dbReference>
<dbReference type="SMR" id="O02495"/>
<dbReference type="BioGRID" id="57298">
    <property type="interactions" value="4"/>
</dbReference>
<dbReference type="DIP" id="DIP-27164N"/>
<dbReference type="FunCoup" id="O02495">
    <property type="interactions" value="2399"/>
</dbReference>
<dbReference type="IntAct" id="O02495">
    <property type="interactions" value="1"/>
</dbReference>
<dbReference type="STRING" id="6239.T10H9.4.1"/>
<dbReference type="TCDB" id="1.F.1.1.3">
    <property type="family name" value="the synaptosomal vesicle fusion pore (svf-pore) family"/>
</dbReference>
<dbReference type="PaxDb" id="6239-T10H9.4"/>
<dbReference type="PeptideAtlas" id="O02495"/>
<dbReference type="EnsemblMetazoa" id="T10H9.4.1">
    <property type="protein sequence ID" value="T10H9.4.1"/>
    <property type="gene ID" value="WBGene00004897"/>
</dbReference>
<dbReference type="GeneID" id="266648"/>
<dbReference type="UCSC" id="T10H9.4">
    <property type="organism name" value="c. elegans"/>
</dbReference>
<dbReference type="AGR" id="WB:WBGene00004897"/>
<dbReference type="WormBase" id="T10H9.4">
    <property type="protein sequence ID" value="CE18252"/>
    <property type="gene ID" value="WBGene00004897"/>
    <property type="gene designation" value="snb-1"/>
</dbReference>
<dbReference type="eggNOG" id="KOG0860">
    <property type="taxonomic scope" value="Eukaryota"/>
</dbReference>
<dbReference type="GeneTree" id="ENSGT00940000158370"/>
<dbReference type="HOGENOM" id="CLU_064620_4_1_1"/>
<dbReference type="InParanoid" id="O02495"/>
<dbReference type="OMA" id="TEQFHRS"/>
<dbReference type="OrthoDB" id="10042941at2759"/>
<dbReference type="PhylomeDB" id="O02495"/>
<dbReference type="Reactome" id="R-CEL-181429">
    <property type="pathway name" value="Serotonin Neurotransmitter Release Cycle"/>
</dbReference>
<dbReference type="Reactome" id="R-CEL-181430">
    <property type="pathway name" value="Norepinephrine Neurotransmitter Release Cycle"/>
</dbReference>
<dbReference type="Reactome" id="R-CEL-199992">
    <property type="pathway name" value="trans-Golgi Network Vesicle Budding"/>
</dbReference>
<dbReference type="Reactome" id="R-CEL-210500">
    <property type="pathway name" value="Glutamate Neurotransmitter Release Cycle"/>
</dbReference>
<dbReference type="Reactome" id="R-CEL-212676">
    <property type="pathway name" value="Dopamine Neurotransmitter Release Cycle"/>
</dbReference>
<dbReference type="Reactome" id="R-CEL-264642">
    <property type="pathway name" value="Acetylcholine Neurotransmitter Release Cycle"/>
</dbReference>
<dbReference type="Reactome" id="R-CEL-432720">
    <property type="pathway name" value="Lysosome Vesicle Biogenesis"/>
</dbReference>
<dbReference type="Reactome" id="R-CEL-432722">
    <property type="pathway name" value="Golgi Associated Vesicle Biogenesis"/>
</dbReference>
<dbReference type="Reactome" id="R-CEL-449836">
    <property type="pathway name" value="Other interleukin signaling"/>
</dbReference>
<dbReference type="Reactome" id="R-CEL-6798695">
    <property type="pathway name" value="Neutrophil degranulation"/>
</dbReference>
<dbReference type="Reactome" id="R-CEL-6811440">
    <property type="pathway name" value="Retrograde transport at the Trans-Golgi-Network"/>
</dbReference>
<dbReference type="Reactome" id="R-CEL-8856825">
    <property type="pathway name" value="Cargo recognition for clathrin-mediated endocytosis"/>
</dbReference>
<dbReference type="Reactome" id="R-CEL-8856828">
    <property type="pathway name" value="Clathrin-mediated endocytosis"/>
</dbReference>
<dbReference type="Reactome" id="R-CEL-888590">
    <property type="pathway name" value="GABA synthesis, release, reuptake and degradation"/>
</dbReference>
<dbReference type="Reactome" id="R-CEL-8980692">
    <property type="pathway name" value="RHOA GTPase cycle"/>
</dbReference>
<dbReference type="Reactome" id="R-CEL-9013026">
    <property type="pathway name" value="RHOB GTPase cycle"/>
</dbReference>
<dbReference type="Reactome" id="R-CEL-9013149">
    <property type="pathway name" value="RAC1 GTPase cycle"/>
</dbReference>
<dbReference type="Reactome" id="R-CEL-9013404">
    <property type="pathway name" value="RAC2 GTPase cycle"/>
</dbReference>
<dbReference type="Reactome" id="R-CEL-9013405">
    <property type="pathway name" value="RHOD GTPase cycle"/>
</dbReference>
<dbReference type="Reactome" id="R-CEL-9013406">
    <property type="pathway name" value="RHOQ GTPase cycle"/>
</dbReference>
<dbReference type="Reactome" id="R-CEL-9013407">
    <property type="pathway name" value="RHOH GTPase cycle"/>
</dbReference>
<dbReference type="Reactome" id="R-CEL-9013408">
    <property type="pathway name" value="RHOG GTPase cycle"/>
</dbReference>
<dbReference type="Reactome" id="R-CEL-9013423">
    <property type="pathway name" value="RAC3 GTPase cycle"/>
</dbReference>
<dbReference type="Reactome" id="R-CEL-9035034">
    <property type="pathway name" value="RHOF GTPase cycle"/>
</dbReference>
<dbReference type="Reactome" id="R-CEL-9609523">
    <property type="pathway name" value="Insertion of tail-anchored proteins into the endoplasmic reticulum membrane"/>
</dbReference>
<dbReference type="PRO" id="PR:O02495"/>
<dbReference type="Proteomes" id="UP000001940">
    <property type="component" value="Chromosome V"/>
</dbReference>
<dbReference type="Bgee" id="WBGene00004897">
    <property type="expression patterns" value="Expressed in pharyngeal muscle cell (C elegans) and 4 other cell types or tissues"/>
</dbReference>
<dbReference type="GO" id="GO:0030424">
    <property type="term" value="C:axon"/>
    <property type="evidence" value="ECO:0000314"/>
    <property type="project" value="WormBase"/>
</dbReference>
<dbReference type="GO" id="GO:0060473">
    <property type="term" value="C:cortical granule"/>
    <property type="evidence" value="ECO:0000314"/>
    <property type="project" value="WormBase"/>
</dbReference>
<dbReference type="GO" id="GO:0043005">
    <property type="term" value="C:neuron projection"/>
    <property type="evidence" value="ECO:0000314"/>
    <property type="project" value="UniProtKB"/>
</dbReference>
<dbReference type="GO" id="GO:0005886">
    <property type="term" value="C:plasma membrane"/>
    <property type="evidence" value="ECO:0000314"/>
    <property type="project" value="WormBase"/>
</dbReference>
<dbReference type="GO" id="GO:0048786">
    <property type="term" value="C:presynaptic active zone"/>
    <property type="evidence" value="ECO:0000314"/>
    <property type="project" value="WormBase"/>
</dbReference>
<dbReference type="GO" id="GO:0031201">
    <property type="term" value="C:SNARE complex"/>
    <property type="evidence" value="ECO:0000318"/>
    <property type="project" value="GO_Central"/>
</dbReference>
<dbReference type="GO" id="GO:0008021">
    <property type="term" value="C:synaptic vesicle"/>
    <property type="evidence" value="ECO:0000314"/>
    <property type="project" value="WormBase"/>
</dbReference>
<dbReference type="GO" id="GO:0030672">
    <property type="term" value="C:synaptic vesicle membrane"/>
    <property type="evidence" value="ECO:0007669"/>
    <property type="project" value="UniProtKB-SubCell"/>
</dbReference>
<dbReference type="GO" id="GO:0005484">
    <property type="term" value="F:SNAP receptor activity"/>
    <property type="evidence" value="ECO:0000318"/>
    <property type="project" value="GO_Central"/>
</dbReference>
<dbReference type="GO" id="GO:0019905">
    <property type="term" value="F:syntaxin binding"/>
    <property type="evidence" value="ECO:0000318"/>
    <property type="project" value="GO_Central"/>
</dbReference>
<dbReference type="GO" id="GO:0030421">
    <property type="term" value="P:defecation"/>
    <property type="evidence" value="ECO:0000315"/>
    <property type="project" value="WormBase"/>
</dbReference>
<dbReference type="GO" id="GO:0002119">
    <property type="term" value="P:nematode larval development"/>
    <property type="evidence" value="ECO:0000315"/>
    <property type="project" value="WormBase"/>
</dbReference>
<dbReference type="GO" id="GO:0043134">
    <property type="term" value="P:regulation of hindgut contraction"/>
    <property type="evidence" value="ECO:0000315"/>
    <property type="project" value="WormBase"/>
</dbReference>
<dbReference type="GO" id="GO:0043051">
    <property type="term" value="P:regulation of nematode pharyngeal pumping"/>
    <property type="evidence" value="ECO:0000315"/>
    <property type="project" value="WormBase"/>
</dbReference>
<dbReference type="GO" id="GO:0007271">
    <property type="term" value="P:synaptic transmission, cholinergic"/>
    <property type="evidence" value="ECO:0000314"/>
    <property type="project" value="WormBase"/>
</dbReference>
<dbReference type="GO" id="GO:0016079">
    <property type="term" value="P:synaptic vesicle exocytosis"/>
    <property type="evidence" value="ECO:0000314"/>
    <property type="project" value="WormBase"/>
</dbReference>
<dbReference type="GO" id="GO:0006906">
    <property type="term" value="P:vesicle fusion"/>
    <property type="evidence" value="ECO:0000318"/>
    <property type="project" value="GO_Central"/>
</dbReference>
<dbReference type="CDD" id="cd15870">
    <property type="entry name" value="R-SNARE_VAMP2"/>
    <property type="match status" value="1"/>
</dbReference>
<dbReference type="FunFam" id="1.20.5.110:FF:000013">
    <property type="entry name" value="Vesicle-associated membrane protein 2"/>
    <property type="match status" value="1"/>
</dbReference>
<dbReference type="Gene3D" id="1.20.5.110">
    <property type="match status" value="1"/>
</dbReference>
<dbReference type="InterPro" id="IPR001388">
    <property type="entry name" value="Synaptobrevin-like"/>
</dbReference>
<dbReference type="InterPro" id="IPR016444">
    <property type="entry name" value="Synaptobrevin/VAMP"/>
</dbReference>
<dbReference type="InterPro" id="IPR042855">
    <property type="entry name" value="V_SNARE_CC"/>
</dbReference>
<dbReference type="PANTHER" id="PTHR45701">
    <property type="entry name" value="SYNAPTOBREVIN FAMILY MEMBER"/>
    <property type="match status" value="1"/>
</dbReference>
<dbReference type="Pfam" id="PF00957">
    <property type="entry name" value="Synaptobrevin"/>
    <property type="match status" value="1"/>
</dbReference>
<dbReference type="PIRSF" id="PIRSF005409">
    <property type="entry name" value="Synaptobrevin_euk"/>
    <property type="match status" value="1"/>
</dbReference>
<dbReference type="PRINTS" id="PR00219">
    <property type="entry name" value="SYNAPTOBREVN"/>
</dbReference>
<dbReference type="SUPFAM" id="SSF58038">
    <property type="entry name" value="SNARE fusion complex"/>
    <property type="match status" value="1"/>
</dbReference>
<dbReference type="PROSITE" id="PS00417">
    <property type="entry name" value="SYNAPTOBREVIN"/>
    <property type="match status" value="1"/>
</dbReference>
<dbReference type="PROSITE" id="PS50892">
    <property type="entry name" value="V_SNARE"/>
    <property type="match status" value="1"/>
</dbReference>
<keyword id="KW-1003">Cell membrane</keyword>
<keyword id="KW-0175">Coiled coil</keyword>
<keyword id="KW-0968">Cytoplasmic vesicle</keyword>
<keyword id="KW-0472">Membrane</keyword>
<keyword id="KW-1185">Reference proteome</keyword>
<keyword id="KW-0770">Synapse</keyword>
<keyword id="KW-0771">Synaptosome</keyword>
<keyword id="KW-0812">Transmembrane</keyword>
<keyword id="KW-1133">Transmembrane helix</keyword>
<evidence type="ECO:0000250" key="1">
    <source>
        <dbReference type="UniProtKB" id="P63045"/>
    </source>
</evidence>
<evidence type="ECO:0000255" key="2"/>
<evidence type="ECO:0000255" key="3">
    <source>
        <dbReference type="PROSITE-ProRule" id="PRU00290"/>
    </source>
</evidence>
<evidence type="ECO:0000256" key="4">
    <source>
        <dbReference type="SAM" id="MobiDB-lite"/>
    </source>
</evidence>
<evidence type="ECO:0000269" key="5">
    <source>
    </source>
</evidence>
<evidence type="ECO:0000269" key="6">
    <source>
    </source>
</evidence>
<evidence type="ECO:0000269" key="7">
    <source>
    </source>
</evidence>
<evidence type="ECO:0000269" key="8">
    <source>
    </source>
</evidence>
<evidence type="ECO:0000269" key="9">
    <source>
    </source>
</evidence>
<evidence type="ECO:0000305" key="10"/>
<evidence type="ECO:0000312" key="11">
    <source>
        <dbReference type="EMBL" id="AAB61234.1"/>
    </source>
</evidence>
<evidence type="ECO:0000312" key="12">
    <source>
        <dbReference type="EMBL" id="AAB61235.1"/>
    </source>
</evidence>
<evidence type="ECO:0000312" key="13">
    <source>
        <dbReference type="WormBase" id="T10H9.4"/>
    </source>
</evidence>
<accession>O02495</accession>
<protein>
    <recommendedName>
        <fullName>Synaptobrevin-1</fullName>
    </recommendedName>
    <alternativeName>
        <fullName>Synaptobrevin-related protein 1</fullName>
    </alternativeName>
</protein>